<comment type="function">
    <text evidence="1">The alpha subunit is responsible for the aldol cleavage of indoleglycerol phosphate to indole and glyceraldehyde 3-phosphate.</text>
</comment>
<comment type="catalytic activity">
    <reaction evidence="1">
        <text>(1S,2R)-1-C-(indol-3-yl)glycerol 3-phosphate + L-serine = D-glyceraldehyde 3-phosphate + L-tryptophan + H2O</text>
        <dbReference type="Rhea" id="RHEA:10532"/>
        <dbReference type="ChEBI" id="CHEBI:15377"/>
        <dbReference type="ChEBI" id="CHEBI:33384"/>
        <dbReference type="ChEBI" id="CHEBI:57912"/>
        <dbReference type="ChEBI" id="CHEBI:58866"/>
        <dbReference type="ChEBI" id="CHEBI:59776"/>
        <dbReference type="EC" id="4.2.1.20"/>
    </reaction>
</comment>
<comment type="pathway">
    <text evidence="1">Amino-acid biosynthesis; L-tryptophan biosynthesis; L-tryptophan from chorismate: step 5/5.</text>
</comment>
<comment type="subunit">
    <text evidence="1">Tetramer of two alpha and two beta chains.</text>
</comment>
<comment type="similarity">
    <text evidence="1">Belongs to the TrpA family.</text>
</comment>
<feature type="chain" id="PRO_1000198722" description="Tryptophan synthase alpha chain">
    <location>
        <begin position="1"/>
        <end position="263"/>
    </location>
</feature>
<feature type="active site" description="Proton acceptor" evidence="1">
    <location>
        <position position="49"/>
    </location>
</feature>
<feature type="active site" description="Proton acceptor" evidence="1">
    <location>
        <position position="60"/>
    </location>
</feature>
<keyword id="KW-0028">Amino-acid biosynthesis</keyword>
<keyword id="KW-0057">Aromatic amino acid biosynthesis</keyword>
<keyword id="KW-0456">Lyase</keyword>
<keyword id="KW-0822">Tryptophan biosynthesis</keyword>
<name>TRPA_CERSK</name>
<organism>
    <name type="scientific">Cereibacter sphaeroides (strain KD131 / KCTC 12085)</name>
    <name type="common">Rhodobacter sphaeroides</name>
    <dbReference type="NCBI Taxonomy" id="557760"/>
    <lineage>
        <taxon>Bacteria</taxon>
        <taxon>Pseudomonadati</taxon>
        <taxon>Pseudomonadota</taxon>
        <taxon>Alphaproteobacteria</taxon>
        <taxon>Rhodobacterales</taxon>
        <taxon>Paracoccaceae</taxon>
        <taxon>Cereibacter</taxon>
    </lineage>
</organism>
<proteinExistence type="inferred from homology"/>
<evidence type="ECO:0000255" key="1">
    <source>
        <dbReference type="HAMAP-Rule" id="MF_00131"/>
    </source>
</evidence>
<reference key="1">
    <citation type="journal article" date="2009" name="J. Bacteriol.">
        <title>Complete genome sequence of Rhodobacter sphaeroides KD131.</title>
        <authorList>
            <person name="Lim S.-K."/>
            <person name="Kim S.J."/>
            <person name="Cha S.H."/>
            <person name="Oh Y.-K."/>
            <person name="Rhee H.-J."/>
            <person name="Kim M.-S."/>
            <person name="Lee J.K."/>
        </authorList>
    </citation>
    <scope>NUCLEOTIDE SEQUENCE [LARGE SCALE GENOMIC DNA]</scope>
    <source>
        <strain>KD131 / KCTC 12085</strain>
    </source>
</reference>
<gene>
    <name evidence="1" type="primary">trpA</name>
    <name type="ordered locus">RSKD131_2198</name>
</gene>
<accession>B9KMG7</accession>
<protein>
    <recommendedName>
        <fullName evidence="1">Tryptophan synthase alpha chain</fullName>
        <ecNumber evidence="1">4.2.1.20</ecNumber>
    </recommendedName>
</protein>
<dbReference type="EC" id="4.2.1.20" evidence="1"/>
<dbReference type="EMBL" id="CP001150">
    <property type="protein sequence ID" value="ACM02058.1"/>
    <property type="molecule type" value="Genomic_DNA"/>
</dbReference>
<dbReference type="RefSeq" id="WP_015921256.1">
    <property type="nucleotide sequence ID" value="NC_011963.1"/>
</dbReference>
<dbReference type="SMR" id="B9KMG7"/>
<dbReference type="GeneID" id="67447585"/>
<dbReference type="KEGG" id="rsk:RSKD131_2198"/>
<dbReference type="HOGENOM" id="CLU_016734_0_4_5"/>
<dbReference type="UniPathway" id="UPA00035">
    <property type="reaction ID" value="UER00044"/>
</dbReference>
<dbReference type="GO" id="GO:0005829">
    <property type="term" value="C:cytosol"/>
    <property type="evidence" value="ECO:0007669"/>
    <property type="project" value="TreeGrafter"/>
</dbReference>
<dbReference type="GO" id="GO:0004834">
    <property type="term" value="F:tryptophan synthase activity"/>
    <property type="evidence" value="ECO:0007669"/>
    <property type="project" value="UniProtKB-UniRule"/>
</dbReference>
<dbReference type="CDD" id="cd04724">
    <property type="entry name" value="Tryptophan_synthase_alpha"/>
    <property type="match status" value="1"/>
</dbReference>
<dbReference type="FunFam" id="3.20.20.70:FF:000037">
    <property type="entry name" value="Tryptophan synthase alpha chain"/>
    <property type="match status" value="1"/>
</dbReference>
<dbReference type="Gene3D" id="3.20.20.70">
    <property type="entry name" value="Aldolase class I"/>
    <property type="match status" value="1"/>
</dbReference>
<dbReference type="HAMAP" id="MF_00131">
    <property type="entry name" value="Trp_synth_alpha"/>
    <property type="match status" value="1"/>
</dbReference>
<dbReference type="InterPro" id="IPR013785">
    <property type="entry name" value="Aldolase_TIM"/>
</dbReference>
<dbReference type="InterPro" id="IPR011060">
    <property type="entry name" value="RibuloseP-bd_barrel"/>
</dbReference>
<dbReference type="InterPro" id="IPR018204">
    <property type="entry name" value="Trp_synthase_alpha_AS"/>
</dbReference>
<dbReference type="InterPro" id="IPR002028">
    <property type="entry name" value="Trp_synthase_suA"/>
</dbReference>
<dbReference type="NCBIfam" id="TIGR00262">
    <property type="entry name" value="trpA"/>
    <property type="match status" value="1"/>
</dbReference>
<dbReference type="PANTHER" id="PTHR43406:SF1">
    <property type="entry name" value="TRYPTOPHAN SYNTHASE ALPHA CHAIN, CHLOROPLASTIC"/>
    <property type="match status" value="1"/>
</dbReference>
<dbReference type="PANTHER" id="PTHR43406">
    <property type="entry name" value="TRYPTOPHAN SYNTHASE, ALPHA CHAIN"/>
    <property type="match status" value="1"/>
</dbReference>
<dbReference type="Pfam" id="PF00290">
    <property type="entry name" value="Trp_syntA"/>
    <property type="match status" value="1"/>
</dbReference>
<dbReference type="SUPFAM" id="SSF51366">
    <property type="entry name" value="Ribulose-phoshate binding barrel"/>
    <property type="match status" value="1"/>
</dbReference>
<dbReference type="PROSITE" id="PS00167">
    <property type="entry name" value="TRP_SYNTHASE_ALPHA"/>
    <property type="match status" value="1"/>
</dbReference>
<sequence length="263" mass="27515">MTRIDDTFRRLRAEGKKAFVAYIMAGDPDLETSLAVMRGLPEAGVDIIELGMPFTDPMADGPTIQTAGQRALEGGQTLTRTLEMVRAFRAENAETPIVMMGYYNPIYARGVETFLAEATEAGIDGLIVVDLPPEEDAELCLPAQAAGLNFIRLATPTTDSRRLPKVLQNTSGFVYYVSITGITGAAAAQAVDVAPEVARIKAATDLPVIVGFGITTPEAAQDLAGIADGCVVGSAIVKLVGEGRPVAEVLDRVAALAAGAHAA</sequence>